<proteinExistence type="inferred from homology"/>
<feature type="chain" id="PRO_0000331353" description="Heme sensor protein HssS">
    <location>
        <begin position="1"/>
        <end position="456"/>
    </location>
</feature>
<feature type="transmembrane region" description="Helical" evidence="2">
    <location>
        <begin position="9"/>
        <end position="29"/>
    </location>
</feature>
<feature type="transmembrane region" description="Helical" evidence="2">
    <location>
        <begin position="164"/>
        <end position="184"/>
    </location>
</feature>
<feature type="domain" description="HAMP" evidence="3">
    <location>
        <begin position="186"/>
        <end position="238"/>
    </location>
</feature>
<feature type="domain" description="Histidine kinase" evidence="4">
    <location>
        <begin position="246"/>
        <end position="456"/>
    </location>
</feature>
<feature type="modified residue" description="Phosphohistidine; by autocatalysis" evidence="4">
    <location>
        <position position="249"/>
    </location>
</feature>
<name>HSSS_STAHJ</name>
<gene>
    <name type="primary">hssS</name>
    <name type="ordered locus">SH0696</name>
</gene>
<evidence type="ECO:0000250" key="1"/>
<evidence type="ECO:0000255" key="2"/>
<evidence type="ECO:0000255" key="3">
    <source>
        <dbReference type="PROSITE-ProRule" id="PRU00102"/>
    </source>
</evidence>
<evidence type="ECO:0000255" key="4">
    <source>
        <dbReference type="PROSITE-ProRule" id="PRU00107"/>
    </source>
</evidence>
<sequence length="456" mass="52618">MFKTLYTRIAIYTITVILFSALVSFLFANVYYHFNLKAHNDAKIMRTLKEARAFHTSSNQSDTQSYFKHLGDMNYQIMIVDHSYHKTFFGEPFRKDTISDSAINQVLKGKAYHGIKNKPFELFITGFFDNETDNTVGIPFNQNNQKLAVFMRPDIGETFSEFRTFLAVLLICLLGISITLVIASTYSIIKPIKILKQATERLMHGDFNSPIYQSRHDEIGTLQYRFEAMRQSLKQVDDMRQHFVQNVSHEIKTPLTHIHRLLSTLQSNVNQGERDQIIHEIHEEVTHLSNLTKELLLLSELDNATHLKFEDDVHFKELITDIIRHEQYGIDNKQLMLMSDIDTVHFRGNNRLLHQACSNLIQNAIKYSNPNSMIDVNLFNNEGTIYFTVTNEGHTIPESVQPHLFDRFYKRNAEDNSNGLGLAITQSIIHLHRGQISVTSNDRDGTTFTVTLPETN</sequence>
<dbReference type="EC" id="2.7.13.3"/>
<dbReference type="EMBL" id="AP006716">
    <property type="protein sequence ID" value="BAE04005.1"/>
    <property type="molecule type" value="Genomic_DNA"/>
</dbReference>
<dbReference type="RefSeq" id="WP_011275021.1">
    <property type="nucleotide sequence ID" value="NC_007168.1"/>
</dbReference>
<dbReference type="SMR" id="Q4L8M0"/>
<dbReference type="KEGG" id="sha:SH0696"/>
<dbReference type="eggNOG" id="COG3850">
    <property type="taxonomic scope" value="Bacteria"/>
</dbReference>
<dbReference type="eggNOG" id="COG5002">
    <property type="taxonomic scope" value="Bacteria"/>
</dbReference>
<dbReference type="HOGENOM" id="CLU_000445_89_6_9"/>
<dbReference type="OrthoDB" id="9813151at2"/>
<dbReference type="Proteomes" id="UP000000543">
    <property type="component" value="Chromosome"/>
</dbReference>
<dbReference type="GO" id="GO:0005886">
    <property type="term" value="C:plasma membrane"/>
    <property type="evidence" value="ECO:0007669"/>
    <property type="project" value="UniProtKB-SubCell"/>
</dbReference>
<dbReference type="GO" id="GO:0005524">
    <property type="term" value="F:ATP binding"/>
    <property type="evidence" value="ECO:0007669"/>
    <property type="project" value="UniProtKB-KW"/>
</dbReference>
<dbReference type="GO" id="GO:0000155">
    <property type="term" value="F:phosphorelay sensor kinase activity"/>
    <property type="evidence" value="ECO:0007669"/>
    <property type="project" value="InterPro"/>
</dbReference>
<dbReference type="CDD" id="cd06225">
    <property type="entry name" value="HAMP"/>
    <property type="match status" value="1"/>
</dbReference>
<dbReference type="CDD" id="cd00075">
    <property type="entry name" value="HATPase"/>
    <property type="match status" value="1"/>
</dbReference>
<dbReference type="CDD" id="cd00082">
    <property type="entry name" value="HisKA"/>
    <property type="match status" value="1"/>
</dbReference>
<dbReference type="FunFam" id="3.30.565.10:FF:000006">
    <property type="entry name" value="Sensor histidine kinase WalK"/>
    <property type="match status" value="1"/>
</dbReference>
<dbReference type="FunFam" id="1.10.287.130:FF:000001">
    <property type="entry name" value="Two-component sensor histidine kinase"/>
    <property type="match status" value="1"/>
</dbReference>
<dbReference type="Gene3D" id="1.10.287.130">
    <property type="match status" value="1"/>
</dbReference>
<dbReference type="Gene3D" id="6.10.340.10">
    <property type="match status" value="1"/>
</dbReference>
<dbReference type="Gene3D" id="3.30.565.10">
    <property type="entry name" value="Histidine kinase-like ATPase, C-terminal domain"/>
    <property type="match status" value="1"/>
</dbReference>
<dbReference type="InterPro" id="IPR050398">
    <property type="entry name" value="Bact_Sensor_His_Kinase"/>
</dbReference>
<dbReference type="InterPro" id="IPR003660">
    <property type="entry name" value="HAMP_dom"/>
</dbReference>
<dbReference type="InterPro" id="IPR036890">
    <property type="entry name" value="HATPase_C_sf"/>
</dbReference>
<dbReference type="InterPro" id="IPR005467">
    <property type="entry name" value="His_kinase_dom"/>
</dbReference>
<dbReference type="InterPro" id="IPR003661">
    <property type="entry name" value="HisK_dim/P_dom"/>
</dbReference>
<dbReference type="InterPro" id="IPR036097">
    <property type="entry name" value="HisK_dim/P_sf"/>
</dbReference>
<dbReference type="InterPro" id="IPR004358">
    <property type="entry name" value="Sig_transdc_His_kin-like_C"/>
</dbReference>
<dbReference type="PANTHER" id="PTHR45528:SF11">
    <property type="entry name" value="HISTIDINE KINASE"/>
    <property type="match status" value="1"/>
</dbReference>
<dbReference type="PANTHER" id="PTHR45528">
    <property type="entry name" value="SENSOR HISTIDINE KINASE CPXA"/>
    <property type="match status" value="1"/>
</dbReference>
<dbReference type="Pfam" id="PF00672">
    <property type="entry name" value="HAMP"/>
    <property type="match status" value="1"/>
</dbReference>
<dbReference type="Pfam" id="PF02518">
    <property type="entry name" value="HATPase_c"/>
    <property type="match status" value="1"/>
</dbReference>
<dbReference type="Pfam" id="PF00512">
    <property type="entry name" value="HisKA"/>
    <property type="match status" value="1"/>
</dbReference>
<dbReference type="PRINTS" id="PR00344">
    <property type="entry name" value="BCTRLSENSOR"/>
</dbReference>
<dbReference type="SMART" id="SM00304">
    <property type="entry name" value="HAMP"/>
    <property type="match status" value="1"/>
</dbReference>
<dbReference type="SMART" id="SM00387">
    <property type="entry name" value="HATPase_c"/>
    <property type="match status" value="1"/>
</dbReference>
<dbReference type="SMART" id="SM00388">
    <property type="entry name" value="HisKA"/>
    <property type="match status" value="1"/>
</dbReference>
<dbReference type="SUPFAM" id="SSF55874">
    <property type="entry name" value="ATPase domain of HSP90 chaperone/DNA topoisomerase II/histidine kinase"/>
    <property type="match status" value="1"/>
</dbReference>
<dbReference type="SUPFAM" id="SSF158472">
    <property type="entry name" value="HAMP domain-like"/>
    <property type="match status" value="1"/>
</dbReference>
<dbReference type="SUPFAM" id="SSF47384">
    <property type="entry name" value="Homodimeric domain of signal transducing histidine kinase"/>
    <property type="match status" value="1"/>
</dbReference>
<dbReference type="PROSITE" id="PS50885">
    <property type="entry name" value="HAMP"/>
    <property type="match status" value="1"/>
</dbReference>
<dbReference type="PROSITE" id="PS50109">
    <property type="entry name" value="HIS_KIN"/>
    <property type="match status" value="1"/>
</dbReference>
<organism>
    <name type="scientific">Staphylococcus haemolyticus (strain JCSC1435)</name>
    <dbReference type="NCBI Taxonomy" id="279808"/>
    <lineage>
        <taxon>Bacteria</taxon>
        <taxon>Bacillati</taxon>
        <taxon>Bacillota</taxon>
        <taxon>Bacilli</taxon>
        <taxon>Bacillales</taxon>
        <taxon>Staphylococcaceae</taxon>
        <taxon>Staphylococcus</taxon>
    </lineage>
</organism>
<keyword id="KW-0067">ATP-binding</keyword>
<keyword id="KW-1003">Cell membrane</keyword>
<keyword id="KW-0418">Kinase</keyword>
<keyword id="KW-0472">Membrane</keyword>
<keyword id="KW-0547">Nucleotide-binding</keyword>
<keyword id="KW-0597">Phosphoprotein</keyword>
<keyword id="KW-0808">Transferase</keyword>
<keyword id="KW-0812">Transmembrane</keyword>
<keyword id="KW-1133">Transmembrane helix</keyword>
<keyword id="KW-0902">Two-component regulatory system</keyword>
<keyword id="KW-0843">Virulence</keyword>
<protein>
    <recommendedName>
        <fullName>Heme sensor protein HssS</fullName>
        <ecNumber>2.7.13.3</ecNumber>
    </recommendedName>
</protein>
<accession>Q4L8M0</accession>
<comment type="function">
    <text evidence="1">Member of the two-component regulatory system HssS/HssR involved in intracellular heme homeostasis and tempering of staphylococcal virulence. HssS functions as a heme sensor histidine kinase which is autophosphorylated at a histidine residue and transfers its phosphate group to an aspartate residue of HssR. HssR/HssS activates the expression of hrtAB, an efflux pump, in response to extracellular heme, hemin, hemoglobin or blood (By similarity).</text>
</comment>
<comment type="catalytic activity">
    <reaction>
        <text>ATP + protein L-histidine = ADP + protein N-phospho-L-histidine.</text>
        <dbReference type="EC" id="2.7.13.3"/>
    </reaction>
</comment>
<comment type="subcellular location">
    <subcellularLocation>
        <location evidence="1">Cell membrane</location>
        <topology evidence="1">Multi-pass membrane protein</topology>
    </subcellularLocation>
</comment>
<comment type="PTM">
    <text evidence="1">Autophosphorylated.</text>
</comment>
<reference key="1">
    <citation type="journal article" date="2005" name="J. Bacteriol.">
        <title>Whole-genome sequencing of Staphylococcus haemolyticus uncovers the extreme plasticity of its genome and the evolution of human-colonizing staphylococcal species.</title>
        <authorList>
            <person name="Takeuchi F."/>
            <person name="Watanabe S."/>
            <person name="Baba T."/>
            <person name="Yuzawa H."/>
            <person name="Ito T."/>
            <person name="Morimoto Y."/>
            <person name="Kuroda M."/>
            <person name="Cui L."/>
            <person name="Takahashi M."/>
            <person name="Ankai A."/>
            <person name="Baba S."/>
            <person name="Fukui S."/>
            <person name="Lee J.C."/>
            <person name="Hiramatsu K."/>
        </authorList>
    </citation>
    <scope>NUCLEOTIDE SEQUENCE [LARGE SCALE GENOMIC DNA]</scope>
    <source>
        <strain>JCSC1435</strain>
    </source>
</reference>